<protein>
    <recommendedName>
        <fullName>Putative steroid dehydrogenase 1</fullName>
        <ecNumber>1.1.1.-</ecNumber>
    </recommendedName>
</protein>
<keyword id="KW-0444">Lipid biosynthesis</keyword>
<keyword id="KW-0443">Lipid metabolism</keyword>
<keyword id="KW-0521">NADP</keyword>
<keyword id="KW-0560">Oxidoreductase</keyword>
<keyword id="KW-1185">Reference proteome</keyword>
<keyword id="KW-0752">Steroid biosynthesis</keyword>
<feature type="chain" id="PRO_0000054579" description="Putative steroid dehydrogenase 1">
    <location>
        <begin position="1"/>
        <end position="314"/>
    </location>
</feature>
<feature type="active site" evidence="1">
    <location>
        <position position="202"/>
    </location>
</feature>
<feature type="binding site" evidence="1">
    <location>
        <begin position="47"/>
        <end position="76"/>
    </location>
    <ligand>
        <name>NADP(+)</name>
        <dbReference type="ChEBI" id="CHEBI:58349"/>
    </ligand>
</feature>
<proteinExistence type="inferred from homology"/>
<gene>
    <name type="primary">stdh-1</name>
    <name type="ORF">C06B3.4</name>
</gene>
<organism>
    <name type="scientific">Caenorhabditis elegans</name>
    <dbReference type="NCBI Taxonomy" id="6239"/>
    <lineage>
        <taxon>Eukaryota</taxon>
        <taxon>Metazoa</taxon>
        <taxon>Ecdysozoa</taxon>
        <taxon>Nematoda</taxon>
        <taxon>Chromadorea</taxon>
        <taxon>Rhabditida</taxon>
        <taxon>Rhabditina</taxon>
        <taxon>Rhabditomorpha</taxon>
        <taxon>Rhabditoidea</taxon>
        <taxon>Rhabditidae</taxon>
        <taxon>Peloderinae</taxon>
        <taxon>Caenorhabditis</taxon>
    </lineage>
</organism>
<evidence type="ECO:0000250" key="1"/>
<evidence type="ECO:0000305" key="2"/>
<comment type="similarity">
    <text evidence="2">Belongs to the short-chain dehydrogenases/reductases (SDR) family. 17-beta-HSD 3 subfamily.</text>
</comment>
<sequence>MDIEWFATGVGAVVVLYILYHFIRITLNILGPYVFCQPIDLKKKAGASWAVVTGATDGIGKSYSFELAKRGFNVYIVSRTQSKLEHTKKEILEVHPDIEVRFATFDFTNPSVSDYEKLLSKLNEVSIGILINNVGMFFDYPEMLHKINGGIDSIANVTIINTLPATLLSAGILPQMVPRKAGIIVNIGSVAGLATMAEWSVYSATKKYVEWITGCLQKEYGHQGIIFQAITPAMVATKMAGNPNTSFFTPDSDTFAKSALNTIGHASQTTGYITHQIECEMLKLLPDFVIDRSIKQTSAQLREALAKNENKPLM</sequence>
<dbReference type="EC" id="1.1.1.-"/>
<dbReference type="EMBL" id="Z77652">
    <property type="protein sequence ID" value="CAB01114.1"/>
    <property type="molecule type" value="Genomic_DNA"/>
</dbReference>
<dbReference type="PIR" id="T18980">
    <property type="entry name" value="T18980"/>
</dbReference>
<dbReference type="RefSeq" id="NP_506449.1">
    <property type="nucleotide sequence ID" value="NM_074048.4"/>
</dbReference>
<dbReference type="SMR" id="Q17703"/>
<dbReference type="FunCoup" id="Q17703">
    <property type="interactions" value="2733"/>
</dbReference>
<dbReference type="STRING" id="6239.C06B3.4.1"/>
<dbReference type="PaxDb" id="6239-C06B3.4"/>
<dbReference type="PeptideAtlas" id="Q17703"/>
<dbReference type="EnsemblMetazoa" id="C06B3.4.1">
    <property type="protein sequence ID" value="C06B3.4.1"/>
    <property type="gene ID" value="WBGene00007363"/>
</dbReference>
<dbReference type="GeneID" id="182291"/>
<dbReference type="KEGG" id="cel:CELE_C06B3.4"/>
<dbReference type="UCSC" id="C06B3.4">
    <property type="organism name" value="c. elegans"/>
</dbReference>
<dbReference type="AGR" id="WB:WBGene00007363"/>
<dbReference type="CTD" id="182291"/>
<dbReference type="WormBase" id="C06B3.4">
    <property type="protein sequence ID" value="CE07961"/>
    <property type="gene ID" value="WBGene00007363"/>
    <property type="gene designation" value="stdh-1"/>
</dbReference>
<dbReference type="eggNOG" id="KOG1014">
    <property type="taxonomic scope" value="Eukaryota"/>
</dbReference>
<dbReference type="GeneTree" id="ENSGT00940000165708"/>
<dbReference type="HOGENOM" id="CLU_010194_38_3_1"/>
<dbReference type="InParanoid" id="Q17703"/>
<dbReference type="OMA" id="GFNVFLH"/>
<dbReference type="OrthoDB" id="5545019at2759"/>
<dbReference type="PhylomeDB" id="Q17703"/>
<dbReference type="PRO" id="PR:Q17703"/>
<dbReference type="Proteomes" id="UP000001940">
    <property type="component" value="Chromosome V"/>
</dbReference>
<dbReference type="Bgee" id="WBGene00007363">
    <property type="expression patterns" value="Expressed in material anatomical entity and 5 other cell types or tissues"/>
</dbReference>
<dbReference type="GO" id="GO:0005783">
    <property type="term" value="C:endoplasmic reticulum"/>
    <property type="evidence" value="ECO:0000318"/>
    <property type="project" value="GO_Central"/>
</dbReference>
<dbReference type="GO" id="GO:0016491">
    <property type="term" value="F:oxidoreductase activity"/>
    <property type="evidence" value="ECO:0007669"/>
    <property type="project" value="UniProtKB-KW"/>
</dbReference>
<dbReference type="GO" id="GO:0030497">
    <property type="term" value="P:fatty acid elongation"/>
    <property type="evidence" value="ECO:0000318"/>
    <property type="project" value="GO_Central"/>
</dbReference>
<dbReference type="GO" id="GO:0006694">
    <property type="term" value="P:steroid biosynthetic process"/>
    <property type="evidence" value="ECO:0007669"/>
    <property type="project" value="UniProtKB-KW"/>
</dbReference>
<dbReference type="CDD" id="cd05356">
    <property type="entry name" value="17beta-HSD1_like_SDR_c"/>
    <property type="match status" value="1"/>
</dbReference>
<dbReference type="FunFam" id="3.40.50.720:FF:000467">
    <property type="entry name" value="Steroid dehydrogenase 4"/>
    <property type="match status" value="1"/>
</dbReference>
<dbReference type="Gene3D" id="3.40.50.720">
    <property type="entry name" value="NAD(P)-binding Rossmann-like Domain"/>
    <property type="match status" value="1"/>
</dbReference>
<dbReference type="InterPro" id="IPR036291">
    <property type="entry name" value="NAD(P)-bd_dom_sf"/>
</dbReference>
<dbReference type="InterPro" id="IPR020904">
    <property type="entry name" value="Sc_DH/Rdtase_CS"/>
</dbReference>
<dbReference type="InterPro" id="IPR002347">
    <property type="entry name" value="SDR_fam"/>
</dbReference>
<dbReference type="PANTHER" id="PTHR43086:SF1">
    <property type="entry name" value="STEROID DEHYDROGENASE 1-RELATED"/>
    <property type="match status" value="1"/>
</dbReference>
<dbReference type="PANTHER" id="PTHR43086">
    <property type="entry name" value="VERY-LONG-CHAIN 3-OXOOACYL-COA REDUCTASE"/>
    <property type="match status" value="1"/>
</dbReference>
<dbReference type="Pfam" id="PF00106">
    <property type="entry name" value="adh_short"/>
    <property type="match status" value="1"/>
</dbReference>
<dbReference type="PIRSF" id="PIRSF000126">
    <property type="entry name" value="11-beta-HSD1"/>
    <property type="match status" value="1"/>
</dbReference>
<dbReference type="PRINTS" id="PR00081">
    <property type="entry name" value="GDHRDH"/>
</dbReference>
<dbReference type="PRINTS" id="PR00080">
    <property type="entry name" value="SDRFAMILY"/>
</dbReference>
<dbReference type="SUPFAM" id="SSF51735">
    <property type="entry name" value="NAD(P)-binding Rossmann-fold domains"/>
    <property type="match status" value="1"/>
</dbReference>
<dbReference type="PROSITE" id="PS00061">
    <property type="entry name" value="ADH_SHORT"/>
    <property type="match status" value="1"/>
</dbReference>
<name>STDH1_CAEEL</name>
<accession>Q17703</accession>
<reference key="1">
    <citation type="journal article" date="1998" name="Science">
        <title>Genome sequence of the nematode C. elegans: a platform for investigating biology.</title>
        <authorList>
            <consortium name="The C. elegans sequencing consortium"/>
        </authorList>
    </citation>
    <scope>NUCLEOTIDE SEQUENCE [LARGE SCALE GENOMIC DNA]</scope>
    <source>
        <strain>Bristol N2</strain>
    </source>
</reference>